<name>MDTL_ECO55</name>
<accession>B7L855</accession>
<feature type="chain" id="PRO_1000185169" description="Multidrug resistance protein MdtL">
    <location>
        <begin position="1"/>
        <end position="391"/>
    </location>
</feature>
<feature type="transmembrane region" description="Helical" evidence="1">
    <location>
        <begin position="4"/>
        <end position="24"/>
    </location>
</feature>
<feature type="transmembrane region" description="Helical" evidence="1">
    <location>
        <begin position="42"/>
        <end position="62"/>
    </location>
</feature>
<feature type="transmembrane region" description="Helical" evidence="1">
    <location>
        <begin position="69"/>
        <end position="89"/>
    </location>
</feature>
<feature type="transmembrane region" description="Helical" evidence="1">
    <location>
        <begin position="93"/>
        <end position="113"/>
    </location>
</feature>
<feature type="transmembrane region" description="Helical" evidence="1">
    <location>
        <begin position="131"/>
        <end position="151"/>
    </location>
</feature>
<feature type="transmembrane region" description="Helical" evidence="1">
    <location>
        <begin position="158"/>
        <end position="178"/>
    </location>
</feature>
<feature type="transmembrane region" description="Helical" evidence="1">
    <location>
        <begin position="203"/>
        <end position="222"/>
    </location>
</feature>
<feature type="transmembrane region" description="Helical" evidence="1">
    <location>
        <begin position="245"/>
        <end position="265"/>
    </location>
</feature>
<feature type="transmembrane region" description="Helical" evidence="1">
    <location>
        <begin position="269"/>
        <end position="289"/>
    </location>
</feature>
<feature type="transmembrane region" description="Helical" evidence="1">
    <location>
        <begin position="293"/>
        <end position="313"/>
    </location>
</feature>
<feature type="transmembrane region" description="Helical" evidence="1">
    <location>
        <begin position="331"/>
        <end position="351"/>
    </location>
</feature>
<feature type="transmembrane region" description="Helical" evidence="1">
    <location>
        <begin position="356"/>
        <end position="376"/>
    </location>
</feature>
<organism>
    <name type="scientific">Escherichia coli (strain 55989 / EAEC)</name>
    <dbReference type="NCBI Taxonomy" id="585055"/>
    <lineage>
        <taxon>Bacteria</taxon>
        <taxon>Pseudomonadati</taxon>
        <taxon>Pseudomonadota</taxon>
        <taxon>Gammaproteobacteria</taxon>
        <taxon>Enterobacterales</taxon>
        <taxon>Enterobacteriaceae</taxon>
        <taxon>Escherichia</taxon>
    </lineage>
</organism>
<dbReference type="EMBL" id="CU928145">
    <property type="protein sequence ID" value="CAV00772.1"/>
    <property type="molecule type" value="Genomic_DNA"/>
</dbReference>
<dbReference type="RefSeq" id="WP_000085982.1">
    <property type="nucleotide sequence ID" value="NC_011748.1"/>
</dbReference>
<dbReference type="SMR" id="B7L855"/>
<dbReference type="KEGG" id="eck:EC55989_4180"/>
<dbReference type="HOGENOM" id="CLU_001265_47_1_6"/>
<dbReference type="Proteomes" id="UP000000746">
    <property type="component" value="Chromosome"/>
</dbReference>
<dbReference type="GO" id="GO:0005886">
    <property type="term" value="C:plasma membrane"/>
    <property type="evidence" value="ECO:0007669"/>
    <property type="project" value="UniProtKB-SubCell"/>
</dbReference>
<dbReference type="GO" id="GO:0022857">
    <property type="term" value="F:transmembrane transporter activity"/>
    <property type="evidence" value="ECO:0007669"/>
    <property type="project" value="UniProtKB-UniRule"/>
</dbReference>
<dbReference type="GO" id="GO:0046677">
    <property type="term" value="P:response to antibiotic"/>
    <property type="evidence" value="ECO:0007669"/>
    <property type="project" value="UniProtKB-KW"/>
</dbReference>
<dbReference type="CDD" id="cd17320">
    <property type="entry name" value="MFS_MdfA_MDR_like"/>
    <property type="match status" value="1"/>
</dbReference>
<dbReference type="FunFam" id="1.20.1720.10:FF:000003">
    <property type="entry name" value="Multidrug resistance protein MdtL"/>
    <property type="match status" value="1"/>
</dbReference>
<dbReference type="Gene3D" id="1.20.1720.10">
    <property type="entry name" value="Multidrug resistance protein D"/>
    <property type="match status" value="1"/>
</dbReference>
<dbReference type="HAMAP" id="MF_01530">
    <property type="entry name" value="MFS_MdtL"/>
    <property type="match status" value="1"/>
</dbReference>
<dbReference type="InterPro" id="IPR011701">
    <property type="entry name" value="MFS"/>
</dbReference>
<dbReference type="InterPro" id="IPR020846">
    <property type="entry name" value="MFS_dom"/>
</dbReference>
<dbReference type="InterPro" id="IPR050189">
    <property type="entry name" value="MFS_Efflux_Transporters"/>
</dbReference>
<dbReference type="InterPro" id="IPR036259">
    <property type="entry name" value="MFS_trans_sf"/>
</dbReference>
<dbReference type="InterPro" id="IPR023697">
    <property type="entry name" value="Multidrug-R_MdtL"/>
</dbReference>
<dbReference type="NCBIfam" id="NF007782">
    <property type="entry name" value="PRK10473.1"/>
    <property type="match status" value="1"/>
</dbReference>
<dbReference type="PANTHER" id="PTHR43124:SF3">
    <property type="entry name" value="CHLORAMPHENICOL EFFLUX PUMP RV0191"/>
    <property type="match status" value="1"/>
</dbReference>
<dbReference type="PANTHER" id="PTHR43124">
    <property type="entry name" value="PURINE EFFLUX PUMP PBUE"/>
    <property type="match status" value="1"/>
</dbReference>
<dbReference type="Pfam" id="PF07690">
    <property type="entry name" value="MFS_1"/>
    <property type="match status" value="1"/>
</dbReference>
<dbReference type="SUPFAM" id="SSF103473">
    <property type="entry name" value="MFS general substrate transporter"/>
    <property type="match status" value="1"/>
</dbReference>
<dbReference type="PROSITE" id="PS50850">
    <property type="entry name" value="MFS"/>
    <property type="match status" value="1"/>
</dbReference>
<evidence type="ECO:0000255" key="1">
    <source>
        <dbReference type="HAMAP-Rule" id="MF_01530"/>
    </source>
</evidence>
<protein>
    <recommendedName>
        <fullName evidence="1">Multidrug resistance protein MdtL</fullName>
    </recommendedName>
</protein>
<proteinExistence type="inferred from homology"/>
<gene>
    <name evidence="1" type="primary">mdtL</name>
    <name type="ordered locus">EC55989_4180</name>
</gene>
<sequence>MSRFLICSFALVLLYPAGIDMYLVGLPRIAADLNASEAQLHIAFSVYLAGMAAAMLFAGKVADRSGRKPVAIPGAALFIIASVFCSLAETSTLFLAGRFLQGLGAGCCYVVAFAILRDTLDDRRRAKVLSLLNGITCIIPVLAPVLGHLIMLKFPWQSLFWAMAMMGIAVLMLSLFILKETRPAAPAASDKPRENSESLLNRFFLSRVVITTLSVSVILTFVNTSPVLLMEIMGFERGEYATIMALTAGVSMTVSFSTPFALGIFKPRTLMITSQVLFLAAGITLAVSPSHAVSLFGITLICAGFSVGFGVAMSQALGPFSLRAGVASSTLGIAQVCGSSLWIWLAAVVGIGAWNMLIGILIACSIVSLLLIMFVAPGRPVAAHEEIHHHA</sequence>
<comment type="function">
    <text evidence="1">Confers resistance to chloramphenicol.</text>
</comment>
<comment type="subcellular location">
    <subcellularLocation>
        <location evidence="1">Cell inner membrane</location>
        <topology evidence="1">Multi-pass membrane protein</topology>
    </subcellularLocation>
</comment>
<comment type="similarity">
    <text evidence="1">Belongs to the major facilitator superfamily. DHA1 family. MdtL (TC 2.A.1.2.22) subfamily.</text>
</comment>
<keyword id="KW-0046">Antibiotic resistance</keyword>
<keyword id="KW-0997">Cell inner membrane</keyword>
<keyword id="KW-1003">Cell membrane</keyword>
<keyword id="KW-0472">Membrane</keyword>
<keyword id="KW-1185">Reference proteome</keyword>
<keyword id="KW-0812">Transmembrane</keyword>
<keyword id="KW-1133">Transmembrane helix</keyword>
<keyword id="KW-0813">Transport</keyword>
<reference key="1">
    <citation type="journal article" date="2009" name="PLoS Genet.">
        <title>Organised genome dynamics in the Escherichia coli species results in highly diverse adaptive paths.</title>
        <authorList>
            <person name="Touchon M."/>
            <person name="Hoede C."/>
            <person name="Tenaillon O."/>
            <person name="Barbe V."/>
            <person name="Baeriswyl S."/>
            <person name="Bidet P."/>
            <person name="Bingen E."/>
            <person name="Bonacorsi S."/>
            <person name="Bouchier C."/>
            <person name="Bouvet O."/>
            <person name="Calteau A."/>
            <person name="Chiapello H."/>
            <person name="Clermont O."/>
            <person name="Cruveiller S."/>
            <person name="Danchin A."/>
            <person name="Diard M."/>
            <person name="Dossat C."/>
            <person name="Karoui M.E."/>
            <person name="Frapy E."/>
            <person name="Garry L."/>
            <person name="Ghigo J.M."/>
            <person name="Gilles A.M."/>
            <person name="Johnson J."/>
            <person name="Le Bouguenec C."/>
            <person name="Lescat M."/>
            <person name="Mangenot S."/>
            <person name="Martinez-Jehanne V."/>
            <person name="Matic I."/>
            <person name="Nassif X."/>
            <person name="Oztas S."/>
            <person name="Petit M.A."/>
            <person name="Pichon C."/>
            <person name="Rouy Z."/>
            <person name="Ruf C.S."/>
            <person name="Schneider D."/>
            <person name="Tourret J."/>
            <person name="Vacherie B."/>
            <person name="Vallenet D."/>
            <person name="Medigue C."/>
            <person name="Rocha E.P.C."/>
            <person name="Denamur E."/>
        </authorList>
    </citation>
    <scope>NUCLEOTIDE SEQUENCE [LARGE SCALE GENOMIC DNA]</scope>
    <source>
        <strain>55989 / EAEC</strain>
    </source>
</reference>